<organism>
    <name type="scientific">Spodoptera frugiperda</name>
    <name type="common">Fall armyworm</name>
    <dbReference type="NCBI Taxonomy" id="7108"/>
    <lineage>
        <taxon>Eukaryota</taxon>
        <taxon>Metazoa</taxon>
        <taxon>Ecdysozoa</taxon>
        <taxon>Arthropoda</taxon>
        <taxon>Hexapoda</taxon>
        <taxon>Insecta</taxon>
        <taxon>Pterygota</taxon>
        <taxon>Neoptera</taxon>
        <taxon>Endopterygota</taxon>
        <taxon>Lepidoptera</taxon>
        <taxon>Glossata</taxon>
        <taxon>Ditrysia</taxon>
        <taxon>Noctuoidea</taxon>
        <taxon>Noctuidae</taxon>
        <taxon>Amphipyrinae</taxon>
        <taxon>Spodoptera</taxon>
    </lineage>
</organism>
<keyword id="KW-0687">Ribonucleoprotein</keyword>
<keyword id="KW-0689">Ribosomal protein</keyword>
<feature type="chain" id="PRO_0000192878" description="Small ribosomal subunit protein eS25">
    <location>
        <begin position="1"/>
        <end position="119"/>
    </location>
</feature>
<feature type="region of interest" description="Disordered" evidence="1">
    <location>
        <begin position="1"/>
        <end position="42"/>
    </location>
</feature>
<feature type="compositionally biased region" description="Basic residues" evidence="1">
    <location>
        <begin position="28"/>
        <end position="37"/>
    </location>
</feature>
<name>RS25_SPOFR</name>
<sequence length="119" mass="13449">MPPKKDTKASAKQPQKTQKKKEGSGGGKAKKKKWSKGKVRDKLNNQVLFDKPTYEKLYKEVPQYKLITPAVVSERLKVRGSLARRALIELREKGLIKQVVQHHGQVIYTRATKGDDPVA</sequence>
<gene>
    <name type="primary">RpS25</name>
</gene>
<evidence type="ECO:0000256" key="1">
    <source>
        <dbReference type="SAM" id="MobiDB-lite"/>
    </source>
</evidence>
<evidence type="ECO:0000305" key="2"/>
<protein>
    <recommendedName>
        <fullName evidence="2">Small ribosomal subunit protein eS25</fullName>
    </recommendedName>
    <alternativeName>
        <fullName>40S ribosomal protein S25</fullName>
    </alternativeName>
</protein>
<accession>Q962Q5</accession>
<reference key="1">
    <citation type="journal article" date="2003" name="Bioinformatics">
        <title>Annotation pattern of ESTs from Spodoptera frugiperda Sf9 cells and analysis of the ribosomal protein genes reveal insect-specific features and unexpectedly low codon usage bias.</title>
        <authorList>
            <person name="Landais I."/>
            <person name="Ogliastro M."/>
            <person name="Mita K."/>
            <person name="Nohata J."/>
            <person name="Lopez-Ferber M."/>
            <person name="Duonor-Cerutti M."/>
            <person name="Shimada T."/>
            <person name="Fournier P."/>
            <person name="Devauchelle G."/>
        </authorList>
    </citation>
    <scope>NUCLEOTIDE SEQUENCE [LARGE SCALE MRNA]</scope>
</reference>
<comment type="similarity">
    <text evidence="2">Belongs to the eukaryotic ribosomal protein eS25 family.</text>
</comment>
<dbReference type="EMBL" id="AF400221">
    <property type="protein sequence ID" value="AAK92193.1"/>
    <property type="molecule type" value="mRNA"/>
</dbReference>
<dbReference type="SMR" id="Q962Q5"/>
<dbReference type="EnsemblMetazoa" id="XM_035594045.2">
    <property type="protein sequence ID" value="XP_035449938.1"/>
    <property type="gene ID" value="LOC118275919"/>
</dbReference>
<dbReference type="OrthoDB" id="10263513at2759"/>
<dbReference type="Proteomes" id="UP000829999">
    <property type="component" value="Unplaced"/>
</dbReference>
<dbReference type="GO" id="GO:1990904">
    <property type="term" value="C:ribonucleoprotein complex"/>
    <property type="evidence" value="ECO:0007669"/>
    <property type="project" value="UniProtKB-KW"/>
</dbReference>
<dbReference type="GO" id="GO:0005840">
    <property type="term" value="C:ribosome"/>
    <property type="evidence" value="ECO:0007669"/>
    <property type="project" value="UniProtKB-KW"/>
</dbReference>
<dbReference type="FunFam" id="1.10.10.10:FF:000166">
    <property type="entry name" value="40S ribosomal protein S25"/>
    <property type="match status" value="1"/>
</dbReference>
<dbReference type="FunFam" id="3.30.63.20:FF:000001">
    <property type="entry name" value="40S ribosomal protein S25"/>
    <property type="match status" value="1"/>
</dbReference>
<dbReference type="Gene3D" id="3.30.63.20">
    <property type="match status" value="1"/>
</dbReference>
<dbReference type="InterPro" id="IPR004977">
    <property type="entry name" value="Ribosomal_eS25"/>
</dbReference>
<dbReference type="PANTHER" id="PTHR12850">
    <property type="entry name" value="40S RIBOSOMAL PROTEIN S25"/>
    <property type="match status" value="1"/>
</dbReference>
<dbReference type="Pfam" id="PF03297">
    <property type="entry name" value="Ribosomal_S25"/>
    <property type="match status" value="1"/>
</dbReference>
<proteinExistence type="inferred from homology"/>